<evidence type="ECO:0000255" key="1">
    <source>
        <dbReference type="HAMAP-Rule" id="MF_00564"/>
    </source>
</evidence>
<gene>
    <name evidence="1" type="primary">rph</name>
    <name type="ordered locus">ABSDF0051</name>
</gene>
<reference key="1">
    <citation type="journal article" date="2008" name="PLoS ONE">
        <title>Comparative analysis of Acinetobacters: three genomes for three lifestyles.</title>
        <authorList>
            <person name="Vallenet D."/>
            <person name="Nordmann P."/>
            <person name="Barbe V."/>
            <person name="Poirel L."/>
            <person name="Mangenot S."/>
            <person name="Bataille E."/>
            <person name="Dossat C."/>
            <person name="Gas S."/>
            <person name="Kreimeyer A."/>
            <person name="Lenoble P."/>
            <person name="Oztas S."/>
            <person name="Poulain J."/>
            <person name="Segurens B."/>
            <person name="Robert C."/>
            <person name="Abergel C."/>
            <person name="Claverie J.-M."/>
            <person name="Raoult D."/>
            <person name="Medigue C."/>
            <person name="Weissenbach J."/>
            <person name="Cruveiller S."/>
        </authorList>
    </citation>
    <scope>NUCLEOTIDE SEQUENCE [LARGE SCALE GENOMIC DNA]</scope>
    <source>
        <strain>SDF</strain>
    </source>
</reference>
<proteinExistence type="inferred from homology"/>
<protein>
    <recommendedName>
        <fullName evidence="1">Ribonuclease PH</fullName>
        <shortName evidence="1">RNase PH</shortName>
        <ecNumber evidence="1">2.7.7.56</ecNumber>
    </recommendedName>
    <alternativeName>
        <fullName evidence="1">tRNA nucleotidyltransferase</fullName>
    </alternativeName>
</protein>
<organism>
    <name type="scientific">Acinetobacter baumannii (strain SDF)</name>
    <dbReference type="NCBI Taxonomy" id="509170"/>
    <lineage>
        <taxon>Bacteria</taxon>
        <taxon>Pseudomonadati</taxon>
        <taxon>Pseudomonadota</taxon>
        <taxon>Gammaproteobacteria</taxon>
        <taxon>Moraxellales</taxon>
        <taxon>Moraxellaceae</taxon>
        <taxon>Acinetobacter</taxon>
        <taxon>Acinetobacter calcoaceticus/baumannii complex</taxon>
    </lineage>
</organism>
<keyword id="KW-0548">Nucleotidyltransferase</keyword>
<keyword id="KW-0694">RNA-binding</keyword>
<keyword id="KW-0698">rRNA processing</keyword>
<keyword id="KW-0808">Transferase</keyword>
<keyword id="KW-0819">tRNA processing</keyword>
<keyword id="KW-0820">tRNA-binding</keyword>
<feature type="chain" id="PRO_1000129309" description="Ribonuclease PH">
    <location>
        <begin position="1"/>
        <end position="238"/>
    </location>
</feature>
<feature type="binding site" evidence="1">
    <location>
        <position position="86"/>
    </location>
    <ligand>
        <name>phosphate</name>
        <dbReference type="ChEBI" id="CHEBI:43474"/>
        <note>substrate</note>
    </ligand>
</feature>
<feature type="binding site" evidence="1">
    <location>
        <begin position="124"/>
        <end position="126"/>
    </location>
    <ligand>
        <name>phosphate</name>
        <dbReference type="ChEBI" id="CHEBI:43474"/>
        <note>substrate</note>
    </ligand>
</feature>
<dbReference type="EC" id="2.7.7.56" evidence="1"/>
<dbReference type="EMBL" id="CU468230">
    <property type="protein sequence ID" value="CAO99466.1"/>
    <property type="molecule type" value="Genomic_DNA"/>
</dbReference>
<dbReference type="SMR" id="B0VMP4"/>
<dbReference type="KEGG" id="abm:ABSDF0051"/>
<dbReference type="HOGENOM" id="CLU_050858_0_0_6"/>
<dbReference type="Proteomes" id="UP000001741">
    <property type="component" value="Chromosome"/>
</dbReference>
<dbReference type="GO" id="GO:0000175">
    <property type="term" value="F:3'-5'-RNA exonuclease activity"/>
    <property type="evidence" value="ECO:0007669"/>
    <property type="project" value="UniProtKB-UniRule"/>
</dbReference>
<dbReference type="GO" id="GO:0000049">
    <property type="term" value="F:tRNA binding"/>
    <property type="evidence" value="ECO:0007669"/>
    <property type="project" value="UniProtKB-UniRule"/>
</dbReference>
<dbReference type="GO" id="GO:0009022">
    <property type="term" value="F:tRNA nucleotidyltransferase activity"/>
    <property type="evidence" value="ECO:0007669"/>
    <property type="project" value="UniProtKB-UniRule"/>
</dbReference>
<dbReference type="GO" id="GO:0016075">
    <property type="term" value="P:rRNA catabolic process"/>
    <property type="evidence" value="ECO:0007669"/>
    <property type="project" value="UniProtKB-UniRule"/>
</dbReference>
<dbReference type="GO" id="GO:0006364">
    <property type="term" value="P:rRNA processing"/>
    <property type="evidence" value="ECO:0007669"/>
    <property type="project" value="UniProtKB-KW"/>
</dbReference>
<dbReference type="GO" id="GO:0008033">
    <property type="term" value="P:tRNA processing"/>
    <property type="evidence" value="ECO:0007669"/>
    <property type="project" value="UniProtKB-UniRule"/>
</dbReference>
<dbReference type="CDD" id="cd11362">
    <property type="entry name" value="RNase_PH_bact"/>
    <property type="match status" value="1"/>
</dbReference>
<dbReference type="FunFam" id="3.30.230.70:FF:000003">
    <property type="entry name" value="Ribonuclease PH"/>
    <property type="match status" value="1"/>
</dbReference>
<dbReference type="Gene3D" id="3.30.230.70">
    <property type="entry name" value="GHMP Kinase, N-terminal domain"/>
    <property type="match status" value="1"/>
</dbReference>
<dbReference type="HAMAP" id="MF_00564">
    <property type="entry name" value="RNase_PH"/>
    <property type="match status" value="1"/>
</dbReference>
<dbReference type="InterPro" id="IPR001247">
    <property type="entry name" value="ExoRNase_PH_dom1"/>
</dbReference>
<dbReference type="InterPro" id="IPR015847">
    <property type="entry name" value="ExoRNase_PH_dom2"/>
</dbReference>
<dbReference type="InterPro" id="IPR036345">
    <property type="entry name" value="ExoRNase_PH_dom2_sf"/>
</dbReference>
<dbReference type="InterPro" id="IPR027408">
    <property type="entry name" value="PNPase/RNase_PH_dom_sf"/>
</dbReference>
<dbReference type="InterPro" id="IPR020568">
    <property type="entry name" value="Ribosomal_Su5_D2-typ_SF"/>
</dbReference>
<dbReference type="InterPro" id="IPR050080">
    <property type="entry name" value="RNase_PH"/>
</dbReference>
<dbReference type="InterPro" id="IPR002381">
    <property type="entry name" value="RNase_PH_bac-type"/>
</dbReference>
<dbReference type="InterPro" id="IPR018336">
    <property type="entry name" value="RNase_PH_CS"/>
</dbReference>
<dbReference type="NCBIfam" id="TIGR01966">
    <property type="entry name" value="RNasePH"/>
    <property type="match status" value="1"/>
</dbReference>
<dbReference type="PANTHER" id="PTHR11953">
    <property type="entry name" value="EXOSOME COMPLEX COMPONENT"/>
    <property type="match status" value="1"/>
</dbReference>
<dbReference type="PANTHER" id="PTHR11953:SF0">
    <property type="entry name" value="EXOSOME COMPLEX COMPONENT RRP41"/>
    <property type="match status" value="1"/>
</dbReference>
<dbReference type="Pfam" id="PF01138">
    <property type="entry name" value="RNase_PH"/>
    <property type="match status" value="1"/>
</dbReference>
<dbReference type="Pfam" id="PF03725">
    <property type="entry name" value="RNase_PH_C"/>
    <property type="match status" value="1"/>
</dbReference>
<dbReference type="SUPFAM" id="SSF55666">
    <property type="entry name" value="Ribonuclease PH domain 2-like"/>
    <property type="match status" value="1"/>
</dbReference>
<dbReference type="SUPFAM" id="SSF54211">
    <property type="entry name" value="Ribosomal protein S5 domain 2-like"/>
    <property type="match status" value="1"/>
</dbReference>
<dbReference type="PROSITE" id="PS01277">
    <property type="entry name" value="RIBONUCLEASE_PH"/>
    <property type="match status" value="1"/>
</dbReference>
<name>RNPH_ACIBS</name>
<accession>B0VMP4</accession>
<comment type="function">
    <text evidence="1">Phosphorolytic 3'-5' exoribonuclease that plays an important role in tRNA 3'-end maturation. Removes nucleotide residues following the 3'-CCA terminus of tRNAs; can also add nucleotides to the ends of RNA molecules by using nucleoside diphosphates as substrates, but this may not be physiologically important. Probably plays a role in initiation of 16S rRNA degradation (leading to ribosome degradation) during starvation.</text>
</comment>
<comment type="catalytic activity">
    <reaction evidence="1">
        <text>tRNA(n+1) + phosphate = tRNA(n) + a ribonucleoside 5'-diphosphate</text>
        <dbReference type="Rhea" id="RHEA:10628"/>
        <dbReference type="Rhea" id="RHEA-COMP:17343"/>
        <dbReference type="Rhea" id="RHEA-COMP:17344"/>
        <dbReference type="ChEBI" id="CHEBI:43474"/>
        <dbReference type="ChEBI" id="CHEBI:57930"/>
        <dbReference type="ChEBI" id="CHEBI:173114"/>
        <dbReference type="EC" id="2.7.7.56"/>
    </reaction>
</comment>
<comment type="subunit">
    <text evidence="1">Homohexameric ring arranged as a trimer of dimers.</text>
</comment>
<comment type="similarity">
    <text evidence="1">Belongs to the RNase PH family.</text>
</comment>
<sequence>MRIDQRALDQLREVKITRNYTRYAEGSVLVEFGHTKVLCTASIDNSVPRFLKGQGQGWVTAEYGMLPRSTHSRCDREAARGKQTGRTQEIQRLIGRSLRAMVDLKKLGENTITIDCDVIQADGGTRTASITGAAVALVDAMNVLLAQKKIKQDPLKGLVAAISVGMYQDEVLLDLCYEEDSNCQTDLNVVMTQAGEFIEIQGTAEDKPFTRAQSNAMLEMAEKGIAELIKKQQEALGW</sequence>